<accession>Q4UPQ3</accession>
<evidence type="ECO:0000255" key="1">
    <source>
        <dbReference type="HAMAP-Rule" id="MF_01208"/>
    </source>
</evidence>
<feature type="chain" id="PRO_1000066325" description="Orotate phosphoribosyltransferase">
    <location>
        <begin position="1"/>
        <end position="219"/>
    </location>
</feature>
<feature type="binding site" description="in other chain" evidence="1">
    <location>
        <position position="26"/>
    </location>
    <ligand>
        <name>5-phospho-alpha-D-ribose 1-diphosphate</name>
        <dbReference type="ChEBI" id="CHEBI:58017"/>
        <note>ligand shared between dimeric partners</note>
    </ligand>
</feature>
<feature type="binding site" evidence="1">
    <location>
        <begin position="34"/>
        <end position="35"/>
    </location>
    <ligand>
        <name>orotate</name>
        <dbReference type="ChEBI" id="CHEBI:30839"/>
    </ligand>
</feature>
<feature type="binding site" description="in other chain" evidence="1">
    <location>
        <begin position="72"/>
        <end position="73"/>
    </location>
    <ligand>
        <name>5-phospho-alpha-D-ribose 1-diphosphate</name>
        <dbReference type="ChEBI" id="CHEBI:58017"/>
        <note>ligand shared between dimeric partners</note>
    </ligand>
</feature>
<feature type="binding site" evidence="1">
    <location>
        <position position="98"/>
    </location>
    <ligand>
        <name>5-phospho-alpha-D-ribose 1-diphosphate</name>
        <dbReference type="ChEBI" id="CHEBI:58017"/>
        <note>ligand shared between dimeric partners</note>
    </ligand>
</feature>
<feature type="binding site" description="in other chain" evidence="1">
    <location>
        <position position="99"/>
    </location>
    <ligand>
        <name>5-phospho-alpha-D-ribose 1-diphosphate</name>
        <dbReference type="ChEBI" id="CHEBI:58017"/>
        <note>ligand shared between dimeric partners</note>
    </ligand>
</feature>
<feature type="binding site" evidence="1">
    <location>
        <position position="102"/>
    </location>
    <ligand>
        <name>5-phospho-alpha-D-ribose 1-diphosphate</name>
        <dbReference type="ChEBI" id="CHEBI:58017"/>
        <note>ligand shared between dimeric partners</note>
    </ligand>
</feature>
<feature type="binding site" evidence="1">
    <location>
        <position position="104"/>
    </location>
    <ligand>
        <name>5-phospho-alpha-D-ribose 1-diphosphate</name>
        <dbReference type="ChEBI" id="CHEBI:58017"/>
        <note>ligand shared between dimeric partners</note>
    </ligand>
</feature>
<feature type="binding site" description="in other chain" evidence="1">
    <location>
        <begin position="124"/>
        <end position="132"/>
    </location>
    <ligand>
        <name>5-phospho-alpha-D-ribose 1-diphosphate</name>
        <dbReference type="ChEBI" id="CHEBI:58017"/>
        <note>ligand shared between dimeric partners</note>
    </ligand>
</feature>
<feature type="binding site" evidence="1">
    <location>
        <position position="128"/>
    </location>
    <ligand>
        <name>orotate</name>
        <dbReference type="ChEBI" id="CHEBI:30839"/>
    </ligand>
</feature>
<feature type="binding site" evidence="1">
    <location>
        <position position="156"/>
    </location>
    <ligand>
        <name>orotate</name>
        <dbReference type="ChEBI" id="CHEBI:30839"/>
    </ligand>
</feature>
<dbReference type="EC" id="2.4.2.10" evidence="1"/>
<dbReference type="EMBL" id="CP000050">
    <property type="protein sequence ID" value="AAY50970.1"/>
    <property type="molecule type" value="Genomic_DNA"/>
</dbReference>
<dbReference type="RefSeq" id="WP_011038922.1">
    <property type="nucleotide sequence ID" value="NZ_CP155948.1"/>
</dbReference>
<dbReference type="SMR" id="Q4UPQ3"/>
<dbReference type="KEGG" id="xcb:XC_3931"/>
<dbReference type="HOGENOM" id="CLU_074878_0_1_6"/>
<dbReference type="UniPathway" id="UPA00070">
    <property type="reaction ID" value="UER00119"/>
</dbReference>
<dbReference type="Proteomes" id="UP000000420">
    <property type="component" value="Chromosome"/>
</dbReference>
<dbReference type="GO" id="GO:0005737">
    <property type="term" value="C:cytoplasm"/>
    <property type="evidence" value="ECO:0007669"/>
    <property type="project" value="TreeGrafter"/>
</dbReference>
<dbReference type="GO" id="GO:0000287">
    <property type="term" value="F:magnesium ion binding"/>
    <property type="evidence" value="ECO:0007669"/>
    <property type="project" value="UniProtKB-UniRule"/>
</dbReference>
<dbReference type="GO" id="GO:0004588">
    <property type="term" value="F:orotate phosphoribosyltransferase activity"/>
    <property type="evidence" value="ECO:0007669"/>
    <property type="project" value="UniProtKB-UniRule"/>
</dbReference>
<dbReference type="GO" id="GO:0006207">
    <property type="term" value="P:'de novo' pyrimidine nucleobase biosynthetic process"/>
    <property type="evidence" value="ECO:0007669"/>
    <property type="project" value="TreeGrafter"/>
</dbReference>
<dbReference type="GO" id="GO:0044205">
    <property type="term" value="P:'de novo' UMP biosynthetic process"/>
    <property type="evidence" value="ECO:0007669"/>
    <property type="project" value="UniProtKB-UniRule"/>
</dbReference>
<dbReference type="GO" id="GO:0046132">
    <property type="term" value="P:pyrimidine ribonucleoside biosynthetic process"/>
    <property type="evidence" value="ECO:0007669"/>
    <property type="project" value="TreeGrafter"/>
</dbReference>
<dbReference type="CDD" id="cd06223">
    <property type="entry name" value="PRTases_typeI"/>
    <property type="match status" value="1"/>
</dbReference>
<dbReference type="FunFam" id="3.40.50.2020:FF:000052">
    <property type="entry name" value="Orotate phosphoribosyltransferase"/>
    <property type="match status" value="1"/>
</dbReference>
<dbReference type="Gene3D" id="3.40.50.2020">
    <property type="match status" value="1"/>
</dbReference>
<dbReference type="HAMAP" id="MF_01208">
    <property type="entry name" value="PyrE"/>
    <property type="match status" value="1"/>
</dbReference>
<dbReference type="InterPro" id="IPR023031">
    <property type="entry name" value="OPRT"/>
</dbReference>
<dbReference type="InterPro" id="IPR004467">
    <property type="entry name" value="Or_phspho_trans_dom"/>
</dbReference>
<dbReference type="InterPro" id="IPR000836">
    <property type="entry name" value="PRibTrfase_dom"/>
</dbReference>
<dbReference type="InterPro" id="IPR029057">
    <property type="entry name" value="PRTase-like"/>
</dbReference>
<dbReference type="NCBIfam" id="TIGR00336">
    <property type="entry name" value="pyrE"/>
    <property type="match status" value="1"/>
</dbReference>
<dbReference type="PANTHER" id="PTHR46683">
    <property type="entry name" value="OROTATE PHOSPHORIBOSYLTRANSFERASE 1-RELATED"/>
    <property type="match status" value="1"/>
</dbReference>
<dbReference type="PANTHER" id="PTHR46683:SF1">
    <property type="entry name" value="OROTATE PHOSPHORIBOSYLTRANSFERASE 1-RELATED"/>
    <property type="match status" value="1"/>
</dbReference>
<dbReference type="Pfam" id="PF00156">
    <property type="entry name" value="Pribosyltran"/>
    <property type="match status" value="1"/>
</dbReference>
<dbReference type="SUPFAM" id="SSF53271">
    <property type="entry name" value="PRTase-like"/>
    <property type="match status" value="1"/>
</dbReference>
<dbReference type="PROSITE" id="PS00103">
    <property type="entry name" value="PUR_PYR_PR_TRANSFER"/>
    <property type="match status" value="1"/>
</dbReference>
<comment type="function">
    <text evidence="1">Catalyzes the transfer of a ribosyl phosphate group from 5-phosphoribose 1-diphosphate to orotate, leading to the formation of orotidine monophosphate (OMP).</text>
</comment>
<comment type="catalytic activity">
    <reaction evidence="1">
        <text>orotidine 5'-phosphate + diphosphate = orotate + 5-phospho-alpha-D-ribose 1-diphosphate</text>
        <dbReference type="Rhea" id="RHEA:10380"/>
        <dbReference type="ChEBI" id="CHEBI:30839"/>
        <dbReference type="ChEBI" id="CHEBI:33019"/>
        <dbReference type="ChEBI" id="CHEBI:57538"/>
        <dbReference type="ChEBI" id="CHEBI:58017"/>
        <dbReference type="EC" id="2.4.2.10"/>
    </reaction>
</comment>
<comment type="cofactor">
    <cofactor evidence="1">
        <name>Mg(2+)</name>
        <dbReference type="ChEBI" id="CHEBI:18420"/>
    </cofactor>
</comment>
<comment type="pathway">
    <text evidence="1">Pyrimidine metabolism; UMP biosynthesis via de novo pathway; UMP from orotate: step 1/2.</text>
</comment>
<comment type="subunit">
    <text evidence="1">Homodimer.</text>
</comment>
<comment type="similarity">
    <text evidence="1">Belongs to the purine/pyrimidine phosphoribosyltransferase family. PyrE subfamily.</text>
</comment>
<proteinExistence type="inferred from homology"/>
<sequence>MTDHRTRFLQLALDADALRFGEFTLKSGRLSPYFFNAGRFDSGAKTAQLAQCYADAIDAAGVEFDLLFGPAYKGIPLATALACAYAGRGRDLPLAFNRKEAKDHGEGGTLIGAPLQGRKVLIVDDVITAGTAIREALGIIRAAGGTPSGIVVALDRQEIASEQDRRSAAQAVAAEAGIPVIAVANLADLLAFAAGNADLVGFREPLLAYRGRYGTDTTG</sequence>
<organism>
    <name type="scientific">Xanthomonas campestris pv. campestris (strain 8004)</name>
    <dbReference type="NCBI Taxonomy" id="314565"/>
    <lineage>
        <taxon>Bacteria</taxon>
        <taxon>Pseudomonadati</taxon>
        <taxon>Pseudomonadota</taxon>
        <taxon>Gammaproteobacteria</taxon>
        <taxon>Lysobacterales</taxon>
        <taxon>Lysobacteraceae</taxon>
        <taxon>Xanthomonas</taxon>
    </lineage>
</organism>
<reference key="1">
    <citation type="journal article" date="2005" name="Genome Res.">
        <title>Comparative and functional genomic analyses of the pathogenicity of phytopathogen Xanthomonas campestris pv. campestris.</title>
        <authorList>
            <person name="Qian W."/>
            <person name="Jia Y."/>
            <person name="Ren S.-X."/>
            <person name="He Y.-Q."/>
            <person name="Feng J.-X."/>
            <person name="Lu L.-F."/>
            <person name="Sun Q."/>
            <person name="Ying G."/>
            <person name="Tang D.-J."/>
            <person name="Tang H."/>
            <person name="Wu W."/>
            <person name="Hao P."/>
            <person name="Wang L."/>
            <person name="Jiang B.-L."/>
            <person name="Zeng S."/>
            <person name="Gu W.-Y."/>
            <person name="Lu G."/>
            <person name="Rong L."/>
            <person name="Tian Y."/>
            <person name="Yao Z."/>
            <person name="Fu G."/>
            <person name="Chen B."/>
            <person name="Fang R."/>
            <person name="Qiang B."/>
            <person name="Chen Z."/>
            <person name="Zhao G.-P."/>
            <person name="Tang J.-L."/>
            <person name="He C."/>
        </authorList>
    </citation>
    <scope>NUCLEOTIDE SEQUENCE [LARGE SCALE GENOMIC DNA]</scope>
    <source>
        <strain>8004</strain>
    </source>
</reference>
<protein>
    <recommendedName>
        <fullName evidence="1">Orotate phosphoribosyltransferase</fullName>
        <shortName evidence="1">OPRT</shortName>
        <shortName evidence="1">OPRTase</shortName>
        <ecNumber evidence="1">2.4.2.10</ecNumber>
    </recommendedName>
</protein>
<name>PYRE_XANC8</name>
<gene>
    <name evidence="1" type="primary">pyrE</name>
    <name type="ordered locus">XC_3931</name>
</gene>
<keyword id="KW-0328">Glycosyltransferase</keyword>
<keyword id="KW-0460">Magnesium</keyword>
<keyword id="KW-0665">Pyrimidine biosynthesis</keyword>
<keyword id="KW-0808">Transferase</keyword>